<proteinExistence type="inferred from homology"/>
<feature type="chain" id="PRO_0000337519" description="Elongation factor Tu 1">
    <location>
        <begin position="1"/>
        <end position="394"/>
    </location>
</feature>
<feature type="domain" description="tr-type G">
    <location>
        <begin position="10"/>
        <end position="204"/>
    </location>
</feature>
<feature type="region of interest" description="G1" evidence="1">
    <location>
        <begin position="19"/>
        <end position="26"/>
    </location>
</feature>
<feature type="region of interest" description="G2" evidence="1">
    <location>
        <begin position="60"/>
        <end position="64"/>
    </location>
</feature>
<feature type="region of interest" description="G3" evidence="1">
    <location>
        <begin position="81"/>
        <end position="84"/>
    </location>
</feature>
<feature type="region of interest" description="G4" evidence="1">
    <location>
        <begin position="136"/>
        <end position="139"/>
    </location>
</feature>
<feature type="region of interest" description="G5" evidence="1">
    <location>
        <begin position="174"/>
        <end position="176"/>
    </location>
</feature>
<feature type="binding site" evidence="2">
    <location>
        <begin position="19"/>
        <end position="26"/>
    </location>
    <ligand>
        <name>GTP</name>
        <dbReference type="ChEBI" id="CHEBI:37565"/>
    </ligand>
</feature>
<feature type="binding site" evidence="2">
    <location>
        <position position="26"/>
    </location>
    <ligand>
        <name>Mg(2+)</name>
        <dbReference type="ChEBI" id="CHEBI:18420"/>
    </ligand>
</feature>
<feature type="binding site" evidence="2">
    <location>
        <begin position="81"/>
        <end position="85"/>
    </location>
    <ligand>
        <name>GTP</name>
        <dbReference type="ChEBI" id="CHEBI:37565"/>
    </ligand>
</feature>
<feature type="binding site" evidence="2">
    <location>
        <begin position="136"/>
        <end position="139"/>
    </location>
    <ligand>
        <name>GTP</name>
        <dbReference type="ChEBI" id="CHEBI:37565"/>
    </ligand>
</feature>
<keyword id="KW-0963">Cytoplasm</keyword>
<keyword id="KW-0251">Elongation factor</keyword>
<keyword id="KW-0342">GTP-binding</keyword>
<keyword id="KW-0378">Hydrolase</keyword>
<keyword id="KW-0460">Magnesium</keyword>
<keyword id="KW-0479">Metal-binding</keyword>
<keyword id="KW-0547">Nucleotide-binding</keyword>
<keyword id="KW-0648">Protein biosynthesis</keyword>
<keyword id="KW-1185">Reference proteome</keyword>
<organism>
    <name type="scientific">Shewanella baltica (strain OS155 / ATCC BAA-1091)</name>
    <dbReference type="NCBI Taxonomy" id="325240"/>
    <lineage>
        <taxon>Bacteria</taxon>
        <taxon>Pseudomonadati</taxon>
        <taxon>Pseudomonadota</taxon>
        <taxon>Gammaproteobacteria</taxon>
        <taxon>Alteromonadales</taxon>
        <taxon>Shewanellaceae</taxon>
        <taxon>Shewanella</taxon>
    </lineage>
</organism>
<name>EFTU1_SHEB5</name>
<dbReference type="EC" id="3.6.5.3" evidence="2"/>
<dbReference type="EMBL" id="CP000563">
    <property type="protein sequence ID" value="ABN63637.1"/>
    <property type="molecule type" value="Genomic_DNA"/>
</dbReference>
<dbReference type="SMR" id="A3DA74"/>
<dbReference type="STRING" id="325240.Sbal_4172"/>
<dbReference type="KEGG" id="sbl:Sbal_4172"/>
<dbReference type="HOGENOM" id="CLU_007265_0_1_6"/>
<dbReference type="OrthoDB" id="9803139at2"/>
<dbReference type="Proteomes" id="UP000001557">
    <property type="component" value="Chromosome"/>
</dbReference>
<dbReference type="GO" id="GO:0005829">
    <property type="term" value="C:cytosol"/>
    <property type="evidence" value="ECO:0007669"/>
    <property type="project" value="TreeGrafter"/>
</dbReference>
<dbReference type="GO" id="GO:0005525">
    <property type="term" value="F:GTP binding"/>
    <property type="evidence" value="ECO:0007669"/>
    <property type="project" value="UniProtKB-UniRule"/>
</dbReference>
<dbReference type="GO" id="GO:0003924">
    <property type="term" value="F:GTPase activity"/>
    <property type="evidence" value="ECO:0007669"/>
    <property type="project" value="InterPro"/>
</dbReference>
<dbReference type="GO" id="GO:0097216">
    <property type="term" value="F:guanosine tetraphosphate binding"/>
    <property type="evidence" value="ECO:0007669"/>
    <property type="project" value="UniProtKB-ARBA"/>
</dbReference>
<dbReference type="GO" id="GO:0003746">
    <property type="term" value="F:translation elongation factor activity"/>
    <property type="evidence" value="ECO:0007669"/>
    <property type="project" value="UniProtKB-UniRule"/>
</dbReference>
<dbReference type="CDD" id="cd01884">
    <property type="entry name" value="EF_Tu"/>
    <property type="match status" value="1"/>
</dbReference>
<dbReference type="CDD" id="cd03697">
    <property type="entry name" value="EFTU_II"/>
    <property type="match status" value="1"/>
</dbReference>
<dbReference type="CDD" id="cd03707">
    <property type="entry name" value="EFTU_III"/>
    <property type="match status" value="1"/>
</dbReference>
<dbReference type="FunFam" id="2.40.30.10:FF:000001">
    <property type="entry name" value="Elongation factor Tu"/>
    <property type="match status" value="1"/>
</dbReference>
<dbReference type="FunFam" id="3.40.50.300:FF:000003">
    <property type="entry name" value="Elongation factor Tu"/>
    <property type="match status" value="1"/>
</dbReference>
<dbReference type="Gene3D" id="3.40.50.300">
    <property type="entry name" value="P-loop containing nucleotide triphosphate hydrolases"/>
    <property type="match status" value="1"/>
</dbReference>
<dbReference type="Gene3D" id="2.40.30.10">
    <property type="entry name" value="Translation factors"/>
    <property type="match status" value="2"/>
</dbReference>
<dbReference type="HAMAP" id="MF_00118_B">
    <property type="entry name" value="EF_Tu_B"/>
    <property type="match status" value="1"/>
</dbReference>
<dbReference type="InterPro" id="IPR041709">
    <property type="entry name" value="EF-Tu_GTP-bd"/>
</dbReference>
<dbReference type="InterPro" id="IPR050055">
    <property type="entry name" value="EF-Tu_GTPase"/>
</dbReference>
<dbReference type="InterPro" id="IPR004161">
    <property type="entry name" value="EFTu-like_2"/>
</dbReference>
<dbReference type="InterPro" id="IPR033720">
    <property type="entry name" value="EFTU_2"/>
</dbReference>
<dbReference type="InterPro" id="IPR031157">
    <property type="entry name" value="G_TR_CS"/>
</dbReference>
<dbReference type="InterPro" id="IPR027417">
    <property type="entry name" value="P-loop_NTPase"/>
</dbReference>
<dbReference type="InterPro" id="IPR005225">
    <property type="entry name" value="Small_GTP-bd"/>
</dbReference>
<dbReference type="InterPro" id="IPR000795">
    <property type="entry name" value="T_Tr_GTP-bd_dom"/>
</dbReference>
<dbReference type="InterPro" id="IPR009000">
    <property type="entry name" value="Transl_B-barrel_sf"/>
</dbReference>
<dbReference type="InterPro" id="IPR009001">
    <property type="entry name" value="Transl_elong_EF1A/Init_IF2_C"/>
</dbReference>
<dbReference type="InterPro" id="IPR004541">
    <property type="entry name" value="Transl_elong_EFTu/EF1A_bac/org"/>
</dbReference>
<dbReference type="InterPro" id="IPR004160">
    <property type="entry name" value="Transl_elong_EFTu/EF1A_C"/>
</dbReference>
<dbReference type="NCBIfam" id="TIGR00485">
    <property type="entry name" value="EF-Tu"/>
    <property type="match status" value="1"/>
</dbReference>
<dbReference type="NCBIfam" id="NF000766">
    <property type="entry name" value="PRK00049.1"/>
    <property type="match status" value="1"/>
</dbReference>
<dbReference type="NCBIfam" id="NF009372">
    <property type="entry name" value="PRK12735.1"/>
    <property type="match status" value="1"/>
</dbReference>
<dbReference type="NCBIfam" id="NF009373">
    <property type="entry name" value="PRK12736.1"/>
    <property type="match status" value="1"/>
</dbReference>
<dbReference type="NCBIfam" id="TIGR00231">
    <property type="entry name" value="small_GTP"/>
    <property type="match status" value="1"/>
</dbReference>
<dbReference type="PANTHER" id="PTHR43721:SF22">
    <property type="entry name" value="ELONGATION FACTOR TU, MITOCHONDRIAL"/>
    <property type="match status" value="1"/>
</dbReference>
<dbReference type="PANTHER" id="PTHR43721">
    <property type="entry name" value="ELONGATION FACTOR TU-RELATED"/>
    <property type="match status" value="1"/>
</dbReference>
<dbReference type="Pfam" id="PF00009">
    <property type="entry name" value="GTP_EFTU"/>
    <property type="match status" value="1"/>
</dbReference>
<dbReference type="Pfam" id="PF03144">
    <property type="entry name" value="GTP_EFTU_D2"/>
    <property type="match status" value="1"/>
</dbReference>
<dbReference type="Pfam" id="PF03143">
    <property type="entry name" value="GTP_EFTU_D3"/>
    <property type="match status" value="1"/>
</dbReference>
<dbReference type="PRINTS" id="PR00315">
    <property type="entry name" value="ELONGATNFCT"/>
</dbReference>
<dbReference type="SUPFAM" id="SSF50465">
    <property type="entry name" value="EF-Tu/eEF-1alpha/eIF2-gamma C-terminal domain"/>
    <property type="match status" value="1"/>
</dbReference>
<dbReference type="SUPFAM" id="SSF52540">
    <property type="entry name" value="P-loop containing nucleoside triphosphate hydrolases"/>
    <property type="match status" value="1"/>
</dbReference>
<dbReference type="SUPFAM" id="SSF50447">
    <property type="entry name" value="Translation proteins"/>
    <property type="match status" value="1"/>
</dbReference>
<dbReference type="PROSITE" id="PS00301">
    <property type="entry name" value="G_TR_1"/>
    <property type="match status" value="1"/>
</dbReference>
<dbReference type="PROSITE" id="PS51722">
    <property type="entry name" value="G_TR_2"/>
    <property type="match status" value="1"/>
</dbReference>
<comment type="function">
    <text evidence="2">GTP hydrolase that promotes the GTP-dependent binding of aminoacyl-tRNA to the A-site of ribosomes during protein biosynthesis.</text>
</comment>
<comment type="catalytic activity">
    <reaction evidence="2">
        <text>GTP + H2O = GDP + phosphate + H(+)</text>
        <dbReference type="Rhea" id="RHEA:19669"/>
        <dbReference type="ChEBI" id="CHEBI:15377"/>
        <dbReference type="ChEBI" id="CHEBI:15378"/>
        <dbReference type="ChEBI" id="CHEBI:37565"/>
        <dbReference type="ChEBI" id="CHEBI:43474"/>
        <dbReference type="ChEBI" id="CHEBI:58189"/>
        <dbReference type="EC" id="3.6.5.3"/>
    </reaction>
    <physiologicalReaction direction="left-to-right" evidence="2">
        <dbReference type="Rhea" id="RHEA:19670"/>
    </physiologicalReaction>
</comment>
<comment type="subunit">
    <text evidence="2">Monomer.</text>
</comment>
<comment type="subcellular location">
    <subcellularLocation>
        <location evidence="2">Cytoplasm</location>
    </subcellularLocation>
</comment>
<comment type="similarity">
    <text evidence="2">Belongs to the TRAFAC class translation factor GTPase superfamily. Classic translation factor GTPase family. EF-Tu/EF-1A subfamily.</text>
</comment>
<gene>
    <name evidence="2" type="primary">tuf1</name>
    <name type="ordered locus">Sbal_4172</name>
</gene>
<evidence type="ECO:0000250" key="1"/>
<evidence type="ECO:0000255" key="2">
    <source>
        <dbReference type="HAMAP-Rule" id="MF_00118"/>
    </source>
</evidence>
<accession>A3DA74</accession>
<protein>
    <recommendedName>
        <fullName evidence="2">Elongation factor Tu 1</fullName>
        <shortName evidence="2">EF-Tu 1</shortName>
        <ecNumber evidence="2">3.6.5.3</ecNumber>
    </recommendedName>
</protein>
<reference key="1">
    <citation type="submission" date="2007-02" db="EMBL/GenBank/DDBJ databases">
        <title>Complete sequence of chromosome of Shewanella baltica OS155.</title>
        <authorList>
            <consortium name="US DOE Joint Genome Institute"/>
            <person name="Copeland A."/>
            <person name="Lucas S."/>
            <person name="Lapidus A."/>
            <person name="Barry K."/>
            <person name="Detter J.C."/>
            <person name="Glavina del Rio T."/>
            <person name="Hammon N."/>
            <person name="Israni S."/>
            <person name="Dalin E."/>
            <person name="Tice H."/>
            <person name="Pitluck S."/>
            <person name="Sims D.R."/>
            <person name="Brettin T."/>
            <person name="Bruce D."/>
            <person name="Han C."/>
            <person name="Tapia R."/>
            <person name="Brainard J."/>
            <person name="Schmutz J."/>
            <person name="Larimer F."/>
            <person name="Land M."/>
            <person name="Hauser L."/>
            <person name="Kyrpides N."/>
            <person name="Mikhailova N."/>
            <person name="Brettar I."/>
            <person name="Klappenbach J."/>
            <person name="Konstantinidis K."/>
            <person name="Rodrigues J."/>
            <person name="Tiedje J."/>
            <person name="Richardson P."/>
        </authorList>
    </citation>
    <scope>NUCLEOTIDE SEQUENCE [LARGE SCALE GENOMIC DNA]</scope>
    <source>
        <strain>OS155 / ATCC BAA-1091</strain>
    </source>
</reference>
<sequence>MAKAKFERIKPHVNVGTIGHVDHGKTTLTAAISHVLAKTYGGEAKDFSQIDNAPEERERGITINTSHIEYDTPSRHYAHVDCPGHADYVKNMITGAAQMDGAILVVASTDGPMPQTREHILLSRQVGVPYIIVFMNKCDMVDDEELLELVEMEVRELLSEYDFPGDDLPVIQGSALKALEGQPEWEAKIIELANALDSYIPEPQRDIDKPFLLPIEDVFSISGRGTVVTGRVERGIVKVGDEVEIVGVRTTTKTTCTGVEMFRKLLDEGRAGENCGVLLRGTKRDDVERGQVLAKPGSINPHTTFESEVYVLSKEEGGRHTPFFKGYRPQFYFRTTDVTGTIELPEGVEMVMPGDNIKMVVTLICPIAMDEGLRFAIREGGRTVGAGVVAKIIA</sequence>